<dbReference type="EC" id="4.2.1.20" evidence="1"/>
<dbReference type="EMBL" id="CP000305">
    <property type="protein sequence ID" value="ABG18001.1"/>
    <property type="molecule type" value="Genomic_DNA"/>
</dbReference>
<dbReference type="EMBL" id="ACNQ01000009">
    <property type="protein sequence ID" value="EEO77125.1"/>
    <property type="molecule type" value="Genomic_DNA"/>
</dbReference>
<dbReference type="RefSeq" id="WP_002210634.1">
    <property type="nucleotide sequence ID" value="NZ_ACNQ01000009.1"/>
</dbReference>
<dbReference type="SMR" id="Q1CJ29"/>
<dbReference type="GeneID" id="57976464"/>
<dbReference type="KEGG" id="ypn:YPN_1672"/>
<dbReference type="HOGENOM" id="CLU_016734_0_4_6"/>
<dbReference type="UniPathway" id="UPA00035">
    <property type="reaction ID" value="UER00044"/>
</dbReference>
<dbReference type="Proteomes" id="UP000008936">
    <property type="component" value="Chromosome"/>
</dbReference>
<dbReference type="GO" id="GO:0005829">
    <property type="term" value="C:cytosol"/>
    <property type="evidence" value="ECO:0007669"/>
    <property type="project" value="TreeGrafter"/>
</dbReference>
<dbReference type="GO" id="GO:0004834">
    <property type="term" value="F:tryptophan synthase activity"/>
    <property type="evidence" value="ECO:0007669"/>
    <property type="project" value="UniProtKB-UniRule"/>
</dbReference>
<dbReference type="CDD" id="cd04724">
    <property type="entry name" value="Tryptophan_synthase_alpha"/>
    <property type="match status" value="1"/>
</dbReference>
<dbReference type="FunFam" id="3.20.20.70:FF:000037">
    <property type="entry name" value="Tryptophan synthase alpha chain"/>
    <property type="match status" value="1"/>
</dbReference>
<dbReference type="Gene3D" id="3.20.20.70">
    <property type="entry name" value="Aldolase class I"/>
    <property type="match status" value="1"/>
</dbReference>
<dbReference type="HAMAP" id="MF_00131">
    <property type="entry name" value="Trp_synth_alpha"/>
    <property type="match status" value="1"/>
</dbReference>
<dbReference type="InterPro" id="IPR013785">
    <property type="entry name" value="Aldolase_TIM"/>
</dbReference>
<dbReference type="InterPro" id="IPR011060">
    <property type="entry name" value="RibuloseP-bd_barrel"/>
</dbReference>
<dbReference type="InterPro" id="IPR018204">
    <property type="entry name" value="Trp_synthase_alpha_AS"/>
</dbReference>
<dbReference type="InterPro" id="IPR002028">
    <property type="entry name" value="Trp_synthase_suA"/>
</dbReference>
<dbReference type="NCBIfam" id="TIGR00262">
    <property type="entry name" value="trpA"/>
    <property type="match status" value="1"/>
</dbReference>
<dbReference type="PANTHER" id="PTHR43406:SF1">
    <property type="entry name" value="TRYPTOPHAN SYNTHASE ALPHA CHAIN, CHLOROPLASTIC"/>
    <property type="match status" value="1"/>
</dbReference>
<dbReference type="PANTHER" id="PTHR43406">
    <property type="entry name" value="TRYPTOPHAN SYNTHASE, ALPHA CHAIN"/>
    <property type="match status" value="1"/>
</dbReference>
<dbReference type="Pfam" id="PF00290">
    <property type="entry name" value="Trp_syntA"/>
    <property type="match status" value="1"/>
</dbReference>
<dbReference type="SUPFAM" id="SSF51366">
    <property type="entry name" value="Ribulose-phoshate binding barrel"/>
    <property type="match status" value="1"/>
</dbReference>
<dbReference type="PROSITE" id="PS00167">
    <property type="entry name" value="TRP_SYNTHASE_ALPHA"/>
    <property type="match status" value="1"/>
</dbReference>
<reference key="1">
    <citation type="journal article" date="2006" name="J. Bacteriol.">
        <title>Complete genome sequence of Yersinia pestis strains Antiqua and Nepal516: evidence of gene reduction in an emerging pathogen.</title>
        <authorList>
            <person name="Chain P.S.G."/>
            <person name="Hu P."/>
            <person name="Malfatti S.A."/>
            <person name="Radnedge L."/>
            <person name="Larimer F."/>
            <person name="Vergez L.M."/>
            <person name="Worsham P."/>
            <person name="Chu M.C."/>
            <person name="Andersen G.L."/>
        </authorList>
    </citation>
    <scope>NUCLEOTIDE SEQUENCE [LARGE SCALE GENOMIC DNA]</scope>
    <source>
        <strain>Nepal516</strain>
    </source>
</reference>
<reference key="2">
    <citation type="submission" date="2009-04" db="EMBL/GenBank/DDBJ databases">
        <title>Yersinia pestis Nepal516A whole genome shotgun sequencing project.</title>
        <authorList>
            <person name="Plunkett G. III"/>
            <person name="Anderson B.D."/>
            <person name="Baumler D.J."/>
            <person name="Burland V."/>
            <person name="Cabot E.L."/>
            <person name="Glasner J.D."/>
            <person name="Mau B."/>
            <person name="Neeno-Eckwall E."/>
            <person name="Perna N.T."/>
            <person name="Munk A.C."/>
            <person name="Tapia R."/>
            <person name="Green L.D."/>
            <person name="Rogers Y.C."/>
            <person name="Detter J.C."/>
            <person name="Bruce D.C."/>
            <person name="Brettin T.S."/>
        </authorList>
    </citation>
    <scope>NUCLEOTIDE SEQUENCE [LARGE SCALE GENOMIC DNA]</scope>
    <source>
        <strain>Nepal516</strain>
    </source>
</reference>
<sequence length="268" mass="28579">MERYQQLFKQLAAKKEGAFVPFVQLGDPSPAMSLNIIDTLIAAGADALELGIPFSDPLADGPTIQNAALRAFAAGVTPGICFEILAEIRQKHPTIPIGLLMYANLVFHNGIDHFYQRCAEVGVDSVLIADVPFEESAPFRAAALRHGIAPIFICPPNADDDLLREIASHGRGYTYLLSRAGVTGAENHGQLPLNHLVDKLREYNAAPALQGFGISEPAQVKASLAAGAAGAISGSAIVKIIEKNVAQPVEMLVQLTRFVTEMKAATRS</sequence>
<accession>Q1CJ29</accession>
<accession>C4GSW5</accession>
<keyword id="KW-0028">Amino-acid biosynthesis</keyword>
<keyword id="KW-0057">Aromatic amino acid biosynthesis</keyword>
<keyword id="KW-0456">Lyase</keyword>
<keyword id="KW-0822">Tryptophan biosynthesis</keyword>
<organism>
    <name type="scientific">Yersinia pestis bv. Antiqua (strain Nepal516)</name>
    <dbReference type="NCBI Taxonomy" id="377628"/>
    <lineage>
        <taxon>Bacteria</taxon>
        <taxon>Pseudomonadati</taxon>
        <taxon>Pseudomonadota</taxon>
        <taxon>Gammaproteobacteria</taxon>
        <taxon>Enterobacterales</taxon>
        <taxon>Yersiniaceae</taxon>
        <taxon>Yersinia</taxon>
    </lineage>
</organism>
<comment type="function">
    <text evidence="1">The alpha subunit is responsible for the aldol cleavage of indoleglycerol phosphate to indole and glyceraldehyde 3-phosphate.</text>
</comment>
<comment type="catalytic activity">
    <reaction evidence="1">
        <text>(1S,2R)-1-C-(indol-3-yl)glycerol 3-phosphate + L-serine = D-glyceraldehyde 3-phosphate + L-tryptophan + H2O</text>
        <dbReference type="Rhea" id="RHEA:10532"/>
        <dbReference type="ChEBI" id="CHEBI:15377"/>
        <dbReference type="ChEBI" id="CHEBI:33384"/>
        <dbReference type="ChEBI" id="CHEBI:57912"/>
        <dbReference type="ChEBI" id="CHEBI:58866"/>
        <dbReference type="ChEBI" id="CHEBI:59776"/>
        <dbReference type="EC" id="4.2.1.20"/>
    </reaction>
</comment>
<comment type="pathway">
    <text evidence="1">Amino-acid biosynthesis; L-tryptophan biosynthesis; L-tryptophan from chorismate: step 5/5.</text>
</comment>
<comment type="subunit">
    <text evidence="1">Tetramer of two alpha and two beta chains.</text>
</comment>
<comment type="similarity">
    <text evidence="1">Belongs to the TrpA family.</text>
</comment>
<feature type="chain" id="PRO_1000018312" description="Tryptophan synthase alpha chain">
    <location>
        <begin position="1"/>
        <end position="268"/>
    </location>
</feature>
<feature type="active site" description="Proton acceptor" evidence="1">
    <location>
        <position position="49"/>
    </location>
</feature>
<feature type="active site" description="Proton acceptor" evidence="1">
    <location>
        <position position="60"/>
    </location>
</feature>
<name>TRPA_YERPN</name>
<protein>
    <recommendedName>
        <fullName evidence="1">Tryptophan synthase alpha chain</fullName>
        <ecNumber evidence="1">4.2.1.20</ecNumber>
    </recommendedName>
</protein>
<evidence type="ECO:0000255" key="1">
    <source>
        <dbReference type="HAMAP-Rule" id="MF_00131"/>
    </source>
</evidence>
<proteinExistence type="inferred from homology"/>
<gene>
    <name evidence="1" type="primary">trpA</name>
    <name type="ordered locus">YPN_1672</name>
    <name type="ORF">YP516_1860</name>
</gene>